<organism>
    <name type="scientific">Salmonella heidelberg (strain SL476)</name>
    <dbReference type="NCBI Taxonomy" id="454169"/>
    <lineage>
        <taxon>Bacteria</taxon>
        <taxon>Pseudomonadati</taxon>
        <taxon>Pseudomonadota</taxon>
        <taxon>Gammaproteobacteria</taxon>
        <taxon>Enterobacterales</taxon>
        <taxon>Enterobacteriaceae</taxon>
        <taxon>Salmonella</taxon>
    </lineage>
</organism>
<dbReference type="EMBL" id="CP001120">
    <property type="protein sequence ID" value="ACF66293.1"/>
    <property type="molecule type" value="Genomic_DNA"/>
</dbReference>
<dbReference type="RefSeq" id="WP_000982749.1">
    <property type="nucleotide sequence ID" value="NC_011083.1"/>
</dbReference>
<dbReference type="SMR" id="B4TDK9"/>
<dbReference type="KEGG" id="seh:SeHA_C4568"/>
<dbReference type="HOGENOM" id="CLU_127561_0_1_6"/>
<dbReference type="Proteomes" id="UP000001866">
    <property type="component" value="Chromosome"/>
</dbReference>
<dbReference type="GO" id="GO:0005886">
    <property type="term" value="C:plasma membrane"/>
    <property type="evidence" value="ECO:0007669"/>
    <property type="project" value="UniProtKB-SubCell"/>
</dbReference>
<dbReference type="GO" id="GO:0016036">
    <property type="term" value="P:cellular response to phosphate starvation"/>
    <property type="evidence" value="ECO:0007669"/>
    <property type="project" value="InterPro"/>
</dbReference>
<dbReference type="HAMAP" id="MF_01048">
    <property type="entry name" value="PsiE"/>
    <property type="match status" value="1"/>
</dbReference>
<dbReference type="InterPro" id="IPR009315">
    <property type="entry name" value="P_starv_induced_PsiE"/>
</dbReference>
<dbReference type="InterPro" id="IPR020948">
    <property type="entry name" value="P_starv_induced_PsiE-like"/>
</dbReference>
<dbReference type="NCBIfam" id="NF002764">
    <property type="entry name" value="PRK02833.1-2"/>
    <property type="match status" value="1"/>
</dbReference>
<dbReference type="NCBIfam" id="NF002765">
    <property type="entry name" value="PRK02833.1-3"/>
    <property type="match status" value="1"/>
</dbReference>
<dbReference type="NCBIfam" id="NF002767">
    <property type="entry name" value="PRK02833.1-5"/>
    <property type="match status" value="1"/>
</dbReference>
<dbReference type="PANTHER" id="PTHR37819">
    <property type="entry name" value="PROTEIN PSIE"/>
    <property type="match status" value="1"/>
</dbReference>
<dbReference type="PANTHER" id="PTHR37819:SF1">
    <property type="entry name" value="PROTEIN PSIE"/>
    <property type="match status" value="1"/>
</dbReference>
<dbReference type="Pfam" id="PF06146">
    <property type="entry name" value="PsiE"/>
    <property type="match status" value="1"/>
</dbReference>
<dbReference type="PIRSF" id="PIRSF029598">
    <property type="entry name" value="PsiE"/>
    <property type="match status" value="1"/>
</dbReference>
<protein>
    <recommendedName>
        <fullName evidence="1">Protein PsiE</fullName>
    </recommendedName>
</protein>
<name>PSIE_SALHS</name>
<evidence type="ECO:0000255" key="1">
    <source>
        <dbReference type="HAMAP-Rule" id="MF_01048"/>
    </source>
</evidence>
<accession>B4TDK9</accession>
<reference key="1">
    <citation type="journal article" date="2011" name="J. Bacteriol.">
        <title>Comparative genomics of 28 Salmonella enterica isolates: evidence for CRISPR-mediated adaptive sublineage evolution.</title>
        <authorList>
            <person name="Fricke W.F."/>
            <person name="Mammel M.K."/>
            <person name="McDermott P.F."/>
            <person name="Tartera C."/>
            <person name="White D.G."/>
            <person name="Leclerc J.E."/>
            <person name="Ravel J."/>
            <person name="Cebula T.A."/>
        </authorList>
    </citation>
    <scope>NUCLEOTIDE SEQUENCE [LARGE SCALE GENOMIC DNA]</scope>
    <source>
        <strain>SL476</strain>
    </source>
</reference>
<feature type="chain" id="PRO_1000136221" description="Protein PsiE">
    <location>
        <begin position="1"/>
        <end position="136"/>
    </location>
</feature>
<feature type="transmembrane region" description="Helical" evidence="1">
    <location>
        <begin position="15"/>
        <end position="35"/>
    </location>
</feature>
<feature type="transmembrane region" description="Helical" evidence="1">
    <location>
        <begin position="55"/>
        <end position="75"/>
    </location>
</feature>
<feature type="transmembrane region" description="Helical" evidence="1">
    <location>
        <begin position="83"/>
        <end position="103"/>
    </location>
</feature>
<feature type="transmembrane region" description="Helical" evidence="1">
    <location>
        <begin position="108"/>
        <end position="128"/>
    </location>
</feature>
<comment type="subcellular location">
    <subcellularLocation>
        <location evidence="1">Cell inner membrane</location>
        <topology evidence="1">Multi-pass membrane protein</topology>
    </subcellularLocation>
</comment>
<comment type="similarity">
    <text evidence="1">Belongs to the PsiE family.</text>
</comment>
<keyword id="KW-0997">Cell inner membrane</keyword>
<keyword id="KW-1003">Cell membrane</keyword>
<keyword id="KW-0472">Membrane</keyword>
<keyword id="KW-0812">Transmembrane</keyword>
<keyword id="KW-1133">Transmembrane helix</keyword>
<sequence>MMPLSRSRLEFIATILQNVLNLGLLTLGLILVVFLGKETVHLADALFAPEQASKYELVEGLVIYFLYFEFIALIVKYFKSGLHFPLRYFVYIGITAIVRLIIVDHKTPMDVLLYSAAILLLVITLWLCNSNRLRRE</sequence>
<proteinExistence type="inferred from homology"/>
<gene>
    <name evidence="1" type="primary">psiE</name>
    <name type="ordered locus">SeHA_C4568</name>
</gene>